<reference key="1">
    <citation type="submission" date="2004-11" db="EMBL/GenBank/DDBJ databases">
        <authorList>
            <consortium name="The German cDNA consortium"/>
        </authorList>
    </citation>
    <scope>NUCLEOTIDE SEQUENCE [LARGE SCALE MRNA]</scope>
    <source>
        <tissue>Kidney</tissue>
    </source>
</reference>
<evidence type="ECO:0000250" key="1"/>
<evidence type="ECO:0000250" key="2">
    <source>
        <dbReference type="UniProtKB" id="O15519"/>
    </source>
</evidence>
<evidence type="ECO:0000250" key="3">
    <source>
        <dbReference type="UniProtKB" id="O35732"/>
    </source>
</evidence>
<evidence type="ECO:0000255" key="4">
    <source>
        <dbReference type="PROSITE-ProRule" id="PRU00065"/>
    </source>
</evidence>
<evidence type="ECO:0000305" key="5"/>
<name>CFLAR_PONAB</name>
<comment type="function">
    <text evidence="1">Apoptosis regulator protein which may function as a crucial link between cell survival and cell death pathways in mammalian cells. Acts as an inhibitor of TNFRSF6 mediated apoptosis. A proteolytic fragment (p43) is likely retained in the death-inducing signaling complex (DISC) thereby blocking further recruitment and processing of caspase-8 at the complex. Full length and shorter isoforms have been shown either to induce apoptosis or to reduce TNFRSF-triggered apoptosis. Lacks enzymatic (caspase) activity (By similarity).</text>
</comment>
<comment type="subunit">
    <text evidence="2 3">TNFRSF6 stimulation triggers recruitment to the death-inducing signaling complex (DISC) formed by TNFRSF6, FADD and CASP8 (By similarity). A proteolytic fragment (p43) stays associated with the DISC (By similarity). Interacts with RIPK1 (By similarity).</text>
</comment>
<comment type="domain">
    <text>The caspase domain lacks the active site residues involved in catalysis.</text>
</comment>
<comment type="PTM">
    <text evidence="3">Proteolytically processed by CASP8 generating subunit p43 and p12.</text>
</comment>
<comment type="similarity">
    <text evidence="5">Belongs to the peptidase C14A family.</text>
</comment>
<dbReference type="EMBL" id="CR858062">
    <property type="protein sequence ID" value="CAH90301.1"/>
    <property type="molecule type" value="mRNA"/>
</dbReference>
<dbReference type="RefSeq" id="NP_001125140.1">
    <property type="nucleotide sequence ID" value="NM_001131668.1"/>
</dbReference>
<dbReference type="SMR" id="Q5RD56"/>
<dbReference type="FunCoup" id="Q5RD56">
    <property type="interactions" value="982"/>
</dbReference>
<dbReference type="STRING" id="9601.ENSPPYP00000014600"/>
<dbReference type="MEROPS" id="C14.971"/>
<dbReference type="GeneID" id="100172025"/>
<dbReference type="KEGG" id="pon:100172025"/>
<dbReference type="CTD" id="8837"/>
<dbReference type="eggNOG" id="KOG3573">
    <property type="taxonomic scope" value="Eukaryota"/>
</dbReference>
<dbReference type="InParanoid" id="Q5RD56"/>
<dbReference type="OrthoDB" id="8816507at2759"/>
<dbReference type="Proteomes" id="UP000001595">
    <property type="component" value="Unplaced"/>
</dbReference>
<dbReference type="GO" id="GO:0004197">
    <property type="term" value="F:cysteine-type endopeptidase activity"/>
    <property type="evidence" value="ECO:0007669"/>
    <property type="project" value="InterPro"/>
</dbReference>
<dbReference type="GO" id="GO:0006915">
    <property type="term" value="P:apoptotic process"/>
    <property type="evidence" value="ECO:0007669"/>
    <property type="project" value="UniProtKB-KW"/>
</dbReference>
<dbReference type="GO" id="GO:0006508">
    <property type="term" value="P:proteolysis"/>
    <property type="evidence" value="ECO:0007669"/>
    <property type="project" value="InterPro"/>
</dbReference>
<dbReference type="GO" id="GO:0042981">
    <property type="term" value="P:regulation of apoptotic process"/>
    <property type="evidence" value="ECO:0007669"/>
    <property type="project" value="InterPro"/>
</dbReference>
<dbReference type="CDD" id="cd00032">
    <property type="entry name" value="CASc"/>
    <property type="match status" value="1"/>
</dbReference>
<dbReference type="CDD" id="cd08337">
    <property type="entry name" value="DED_c-FLIP_r1"/>
    <property type="match status" value="1"/>
</dbReference>
<dbReference type="CDD" id="cd08340">
    <property type="entry name" value="DED_c-FLIP_r2"/>
    <property type="match status" value="1"/>
</dbReference>
<dbReference type="FunFam" id="1.10.533.10:FF:000020">
    <property type="entry name" value="CASP8 and FADD like apoptosis regulator"/>
    <property type="match status" value="1"/>
</dbReference>
<dbReference type="FunFam" id="1.10.533.10:FF:000016">
    <property type="entry name" value="CASP8 and FADD-like apoptosis regulator"/>
    <property type="match status" value="1"/>
</dbReference>
<dbReference type="Gene3D" id="3.40.50.1460">
    <property type="match status" value="1"/>
</dbReference>
<dbReference type="Gene3D" id="1.10.533.10">
    <property type="entry name" value="Death Domain, Fas"/>
    <property type="match status" value="2"/>
</dbReference>
<dbReference type="InterPro" id="IPR029030">
    <property type="entry name" value="Caspase-like_dom_sf"/>
</dbReference>
<dbReference type="InterPro" id="IPR011029">
    <property type="entry name" value="DEATH-like_dom_sf"/>
</dbReference>
<dbReference type="InterPro" id="IPR001875">
    <property type="entry name" value="DED_dom"/>
</dbReference>
<dbReference type="InterPro" id="IPR011600">
    <property type="entry name" value="Pept_C14_caspase"/>
</dbReference>
<dbReference type="InterPro" id="IPR001309">
    <property type="entry name" value="Pept_C14_p20"/>
</dbReference>
<dbReference type="InterPro" id="IPR015917">
    <property type="entry name" value="Pept_C14A"/>
</dbReference>
<dbReference type="PANTHER" id="PTHR48169:SF3">
    <property type="entry name" value="CASP8 AND FADD LIKE APOPTOSIS REGULATOR"/>
    <property type="match status" value="1"/>
</dbReference>
<dbReference type="PANTHER" id="PTHR48169">
    <property type="entry name" value="DED DOMAIN-CONTAINING PROTEIN"/>
    <property type="match status" value="1"/>
</dbReference>
<dbReference type="Pfam" id="PF01335">
    <property type="entry name" value="DED"/>
    <property type="match status" value="1"/>
</dbReference>
<dbReference type="Pfam" id="PF00656">
    <property type="entry name" value="Peptidase_C14"/>
    <property type="match status" value="1"/>
</dbReference>
<dbReference type="SMART" id="SM00115">
    <property type="entry name" value="CASc"/>
    <property type="match status" value="1"/>
</dbReference>
<dbReference type="SMART" id="SM00031">
    <property type="entry name" value="DED"/>
    <property type="match status" value="2"/>
</dbReference>
<dbReference type="SUPFAM" id="SSF52129">
    <property type="entry name" value="Caspase-like"/>
    <property type="match status" value="1"/>
</dbReference>
<dbReference type="SUPFAM" id="SSF47986">
    <property type="entry name" value="DEATH domain"/>
    <property type="match status" value="2"/>
</dbReference>
<dbReference type="PROSITE" id="PS50208">
    <property type="entry name" value="CASPASE_P20"/>
    <property type="match status" value="1"/>
</dbReference>
<dbReference type="PROSITE" id="PS50168">
    <property type="entry name" value="DED"/>
    <property type="match status" value="2"/>
</dbReference>
<sequence length="480" mass="55360">MSAEVIHQVEEALDTDEKEMLLFSCRDVAIDVVPPNVRDLLDILRERGKLSVGDLAELLYRVRRFDLLKRILKMDRKAVETHLLRNPHLVSDYRVLMAEIGEDLDKSDVSSLIFLMKDYMGRGKISKEKSFLDLVVELEKLNLVAPDQLDLLEKCLKNIHRIDLKTKIQKYKQSVQGAGTSYRNVLQAAIQKSFKDPSNNFRLHNGRSKEQRLKEQLGTQQEPVKKSIQESEAFLPQSVPEERYKMKSKPLGICLIIDCIGNETELLRDTFTSLGYEVQKFLHLSMHGISQILGQFACMPEHRDYDSFVCVLVSRGGSQSVYGVDQTHSGLPLHHIRRMFMGDSCPYLAGKPKIFFIQNYVVSEGQLEDSSLLEVDGPAMKNVEFKAQKRGLCTVHREADFFWSLCTADVSLLEWSHSSPSLYLQCLSQKLRQERKRPLLDLHIELNGYMYDWNSRVSAKEKYYVWLQHTLRKKLIPSYT</sequence>
<gene>
    <name type="primary">CFLAR</name>
</gene>
<proteinExistence type="evidence at transcript level"/>
<accession>Q5RD56</accession>
<protein>
    <recommendedName>
        <fullName>CASP8 and FADD-like apoptosis regulator</fullName>
    </recommendedName>
    <component>
        <recommendedName>
            <fullName>CASP8 and FADD-like apoptosis regulator subunit p43</fullName>
        </recommendedName>
    </component>
    <component>
        <recommendedName>
            <fullName>CASP8 and FADD-like apoptosis regulator subunit p12</fullName>
        </recommendedName>
    </component>
</protein>
<organism>
    <name type="scientific">Pongo abelii</name>
    <name type="common">Sumatran orangutan</name>
    <name type="synonym">Pongo pygmaeus abelii</name>
    <dbReference type="NCBI Taxonomy" id="9601"/>
    <lineage>
        <taxon>Eukaryota</taxon>
        <taxon>Metazoa</taxon>
        <taxon>Chordata</taxon>
        <taxon>Craniata</taxon>
        <taxon>Vertebrata</taxon>
        <taxon>Euteleostomi</taxon>
        <taxon>Mammalia</taxon>
        <taxon>Eutheria</taxon>
        <taxon>Euarchontoglires</taxon>
        <taxon>Primates</taxon>
        <taxon>Haplorrhini</taxon>
        <taxon>Catarrhini</taxon>
        <taxon>Hominidae</taxon>
        <taxon>Pongo</taxon>
    </lineage>
</organism>
<keyword id="KW-0053">Apoptosis</keyword>
<keyword id="KW-1185">Reference proteome</keyword>
<keyword id="KW-0677">Repeat</keyword>
<feature type="chain" id="PRO_0000045838" description="CASP8 and FADD-like apoptosis regulator subunit p43">
    <location>
        <begin position="1"/>
        <end position="376"/>
    </location>
</feature>
<feature type="chain" id="PRO_0000045839" description="CASP8 and FADD-like apoptosis regulator subunit p12" evidence="3">
    <location>
        <begin position="377"/>
        <end position="480"/>
    </location>
</feature>
<feature type="domain" description="DED 1" evidence="4">
    <location>
        <begin position="1"/>
        <end position="73"/>
    </location>
</feature>
<feature type="domain" description="DED 2" evidence="4">
    <location>
        <begin position="92"/>
        <end position="170"/>
    </location>
</feature>
<feature type="region of interest" description="Not proteolytically processed and involved in apoptosis inhibition" evidence="1">
    <location>
        <begin position="1"/>
        <end position="435"/>
    </location>
</feature>
<feature type="region of interest" description="Interaction with CASP8 propeptide" evidence="2">
    <location>
        <begin position="1"/>
        <end position="305"/>
    </location>
</feature>
<feature type="region of interest" description="Interaction with FADD" evidence="2">
    <location>
        <begin position="1"/>
        <end position="227"/>
    </location>
</feature>
<feature type="region of interest" description="Interaction with CASP8" evidence="2">
    <location>
        <begin position="1"/>
        <end position="195"/>
    </location>
</feature>
<feature type="region of interest" description="Interaction with TRAF1 and TRAF2" evidence="2">
    <location>
        <begin position="192"/>
        <end position="480"/>
    </location>
</feature>
<feature type="region of interest" description="Interaction with CASP3" evidence="2">
    <location>
        <begin position="192"/>
        <end position="435"/>
    </location>
</feature>
<feature type="region of interest" description="Interaction with CASP8 subunits p18 and p10" evidence="2">
    <location>
        <begin position="217"/>
        <end position="480"/>
    </location>
</feature>
<feature type="region of interest" description="Caspase">
    <location>
        <begin position="263"/>
        <end position="358"/>
    </location>
</feature>
<feature type="region of interest" description="Interaction with CASP8" evidence="2">
    <location>
        <begin position="370"/>
        <end position="480"/>
    </location>
</feature>
<feature type="site" description="Cleavage; by CASP8" evidence="3">
    <location>
        <begin position="369"/>
        <end position="370"/>
    </location>
</feature>
<feature type="site" description="Cleavage; by CASP8" evidence="3">
    <location>
        <begin position="376"/>
        <end position="377"/>
    </location>
</feature>